<protein>
    <recommendedName>
        <fullName evidence="1">7-cyano-7-deazaguanine synthase</fullName>
        <ecNumber evidence="1">6.3.4.20</ecNumber>
    </recommendedName>
    <alternativeName>
        <fullName evidence="1">7-cyano-7-carbaguanine synthase</fullName>
    </alternativeName>
    <alternativeName>
        <fullName evidence="1">PreQ(0) synthase</fullName>
    </alternativeName>
    <alternativeName>
        <fullName evidence="1">Queuosine biosynthesis protein QueC</fullName>
    </alternativeName>
</protein>
<reference key="1">
    <citation type="journal article" date="2004" name="J. Bacteriol.">
        <title>An evolutionary hot spot: the pNGR234b replicon of Rhizobium sp. strain NGR234.</title>
        <authorList>
            <person name="Streit W.R."/>
            <person name="Schmitz R.A."/>
            <person name="Perret X."/>
            <person name="Staehelin C."/>
            <person name="Deakin W.J."/>
            <person name="Raasch C."/>
            <person name="Liesegang H."/>
            <person name="Broughton W.J."/>
        </authorList>
    </citation>
    <scope>NUCLEOTIDE SEQUENCE [LARGE SCALE GENOMIC DNA]</scope>
    <source>
        <strain>NBRC 101917 / NGR234</strain>
    </source>
</reference>
<reference key="2">
    <citation type="journal article" date="2009" name="Appl. Environ. Microbiol.">
        <title>Rhizobium sp. strain NGR234 possesses a remarkable number of secretion systems.</title>
        <authorList>
            <person name="Schmeisser C."/>
            <person name="Liesegang H."/>
            <person name="Krysciak D."/>
            <person name="Bakkou N."/>
            <person name="Le Quere A."/>
            <person name="Wollherr A."/>
            <person name="Heinemeyer I."/>
            <person name="Morgenstern B."/>
            <person name="Pommerening-Roeser A."/>
            <person name="Flores M."/>
            <person name="Palacios R."/>
            <person name="Brenner S."/>
            <person name="Gottschalk G."/>
            <person name="Schmitz R.A."/>
            <person name="Broughton W.J."/>
            <person name="Perret X."/>
            <person name="Strittmatter A.W."/>
            <person name="Streit W.R."/>
        </authorList>
    </citation>
    <scope>NUCLEOTIDE SEQUENCE [LARGE SCALE GENOMIC DNA]</scope>
    <source>
        <strain>NBRC 101917 / NGR234</strain>
    </source>
</reference>
<gene>
    <name evidence="1" type="primary">queC</name>
    <name type="synonym">exsB</name>
    <name type="ordered locus">NGR_b18180</name>
    <name type="ORF">RNGR00025</name>
</gene>
<keyword id="KW-0067">ATP-binding</keyword>
<keyword id="KW-0436">Ligase</keyword>
<keyword id="KW-0479">Metal-binding</keyword>
<keyword id="KW-0547">Nucleotide-binding</keyword>
<keyword id="KW-0614">Plasmid</keyword>
<keyword id="KW-0671">Queuosine biosynthesis</keyword>
<keyword id="KW-1185">Reference proteome</keyword>
<keyword id="KW-0862">Zinc</keyword>
<geneLocation type="plasmid">
    <name>sym pNGR234b</name>
</geneLocation>
<feature type="chain" id="PRO_0000246903" description="7-cyano-7-deazaguanine synthase">
    <location>
        <begin position="1"/>
        <end position="236"/>
    </location>
</feature>
<feature type="binding site" evidence="1">
    <location>
        <begin position="7"/>
        <end position="17"/>
    </location>
    <ligand>
        <name>ATP</name>
        <dbReference type="ChEBI" id="CHEBI:30616"/>
    </ligand>
</feature>
<feature type="binding site" evidence="1">
    <location>
        <position position="185"/>
    </location>
    <ligand>
        <name>Zn(2+)</name>
        <dbReference type="ChEBI" id="CHEBI:29105"/>
    </ligand>
</feature>
<feature type="binding site" evidence="1">
    <location>
        <position position="193"/>
    </location>
    <ligand>
        <name>Zn(2+)</name>
        <dbReference type="ChEBI" id="CHEBI:29105"/>
    </ligand>
</feature>
<feature type="binding site" evidence="1">
    <location>
        <position position="196"/>
    </location>
    <ligand>
        <name>Zn(2+)</name>
        <dbReference type="ChEBI" id="CHEBI:29105"/>
    </ligand>
</feature>
<feature type="binding site" evidence="1">
    <location>
        <position position="199"/>
    </location>
    <ligand>
        <name>Zn(2+)</name>
        <dbReference type="ChEBI" id="CHEBI:29105"/>
    </ligand>
</feature>
<comment type="function">
    <text evidence="1">Catalyzes the ATP-dependent conversion of 7-carboxy-7-deazaguanine (CDG) to 7-cyano-7-deazaguanine (preQ(0)).</text>
</comment>
<comment type="catalytic activity">
    <reaction evidence="1">
        <text>7-carboxy-7-deazaguanine + NH4(+) + ATP = 7-cyano-7-deazaguanine + ADP + phosphate + H2O + H(+)</text>
        <dbReference type="Rhea" id="RHEA:27982"/>
        <dbReference type="ChEBI" id="CHEBI:15377"/>
        <dbReference type="ChEBI" id="CHEBI:15378"/>
        <dbReference type="ChEBI" id="CHEBI:28938"/>
        <dbReference type="ChEBI" id="CHEBI:30616"/>
        <dbReference type="ChEBI" id="CHEBI:43474"/>
        <dbReference type="ChEBI" id="CHEBI:45075"/>
        <dbReference type="ChEBI" id="CHEBI:61036"/>
        <dbReference type="ChEBI" id="CHEBI:456216"/>
        <dbReference type="EC" id="6.3.4.20"/>
    </reaction>
</comment>
<comment type="cofactor">
    <cofactor evidence="1">
        <name>Zn(2+)</name>
        <dbReference type="ChEBI" id="CHEBI:29105"/>
    </cofactor>
    <text evidence="1">Binds 1 zinc ion per subunit.</text>
</comment>
<comment type="pathway">
    <text evidence="1">Purine metabolism; 7-cyano-7-deazaguanine biosynthesis.</text>
</comment>
<comment type="similarity">
    <text evidence="1">Belongs to the QueC family.</text>
</comment>
<accession>Q6W2G5</accession>
<accession>C3KLI2</accession>
<sequence>MKTIVICSGGLDSVSLAHRIAAEHELLGLLSFDYGQRHRKELDFAAACAKRLGVPHQIIDIREIGRHLTGSALTDDVDVPDGHYAEETMKTTVVPNRNAIMLAIAFGVAATRKADAVAAAVHGGDHFIYPDCRPGFIDAFQVMQNHALEGYADVILYTPYVNVSKADIVADGAKHHTPFAETWSCYKGGTRHCGRCGTCVERREAFHLAGVTDPTEYEDPEFWVAATAAYVAEEVK</sequence>
<organism>
    <name type="scientific">Sinorhizobium fredii (strain NBRC 101917 / NGR234)</name>
    <dbReference type="NCBI Taxonomy" id="394"/>
    <lineage>
        <taxon>Bacteria</taxon>
        <taxon>Pseudomonadati</taxon>
        <taxon>Pseudomonadota</taxon>
        <taxon>Alphaproteobacteria</taxon>
        <taxon>Hyphomicrobiales</taxon>
        <taxon>Rhizobiaceae</taxon>
        <taxon>Sinorhizobium/Ensifer group</taxon>
        <taxon>Sinorhizobium</taxon>
    </lineage>
</organism>
<name>QUEC_SINFN</name>
<dbReference type="EC" id="6.3.4.20" evidence="1"/>
<dbReference type="EMBL" id="AY316746">
    <property type="protein sequence ID" value="AAQ87052.1"/>
    <property type="molecule type" value="Genomic_DNA"/>
</dbReference>
<dbReference type="EMBL" id="CP000874">
    <property type="protein sequence ID" value="ACP23268.1"/>
    <property type="molecule type" value="Genomic_DNA"/>
</dbReference>
<dbReference type="RefSeq" id="WP_015887891.1">
    <property type="nucleotide sequence ID" value="NC_012586.1"/>
</dbReference>
<dbReference type="RefSeq" id="YP_002824021.1">
    <property type="nucleotide sequence ID" value="NC_012586.1"/>
</dbReference>
<dbReference type="SMR" id="Q6W2G5"/>
<dbReference type="KEGG" id="rhi:NGR_b18180"/>
<dbReference type="PATRIC" id="fig|394.7.peg.2236"/>
<dbReference type="HOGENOM" id="CLU_081854_1_0_5"/>
<dbReference type="OrthoDB" id="9789567at2"/>
<dbReference type="UniPathway" id="UPA00391"/>
<dbReference type="Proteomes" id="UP000001054">
    <property type="component" value="Plasmid pNGR234b"/>
</dbReference>
<dbReference type="GO" id="GO:0005524">
    <property type="term" value="F:ATP binding"/>
    <property type="evidence" value="ECO:0007669"/>
    <property type="project" value="UniProtKB-UniRule"/>
</dbReference>
<dbReference type="GO" id="GO:0016879">
    <property type="term" value="F:ligase activity, forming carbon-nitrogen bonds"/>
    <property type="evidence" value="ECO:0007669"/>
    <property type="project" value="UniProtKB-UniRule"/>
</dbReference>
<dbReference type="GO" id="GO:0008270">
    <property type="term" value="F:zinc ion binding"/>
    <property type="evidence" value="ECO:0007669"/>
    <property type="project" value="UniProtKB-UniRule"/>
</dbReference>
<dbReference type="GO" id="GO:0008616">
    <property type="term" value="P:queuosine biosynthetic process"/>
    <property type="evidence" value="ECO:0007669"/>
    <property type="project" value="UniProtKB-UniRule"/>
</dbReference>
<dbReference type="CDD" id="cd01995">
    <property type="entry name" value="QueC-like"/>
    <property type="match status" value="1"/>
</dbReference>
<dbReference type="Gene3D" id="3.40.50.620">
    <property type="entry name" value="HUPs"/>
    <property type="match status" value="1"/>
</dbReference>
<dbReference type="HAMAP" id="MF_01633">
    <property type="entry name" value="QueC"/>
    <property type="match status" value="1"/>
</dbReference>
<dbReference type="InterPro" id="IPR018317">
    <property type="entry name" value="QueC"/>
</dbReference>
<dbReference type="InterPro" id="IPR014729">
    <property type="entry name" value="Rossmann-like_a/b/a_fold"/>
</dbReference>
<dbReference type="NCBIfam" id="TIGR00364">
    <property type="entry name" value="7-cyano-7-deazaguanine synthase QueC"/>
    <property type="match status" value="1"/>
</dbReference>
<dbReference type="PANTHER" id="PTHR42914">
    <property type="entry name" value="7-CYANO-7-DEAZAGUANINE SYNTHASE"/>
    <property type="match status" value="1"/>
</dbReference>
<dbReference type="PANTHER" id="PTHR42914:SF1">
    <property type="entry name" value="7-CYANO-7-DEAZAGUANINE SYNTHASE"/>
    <property type="match status" value="1"/>
</dbReference>
<dbReference type="Pfam" id="PF06508">
    <property type="entry name" value="QueC"/>
    <property type="match status" value="1"/>
</dbReference>
<dbReference type="PIRSF" id="PIRSF006293">
    <property type="entry name" value="ExsB"/>
    <property type="match status" value="1"/>
</dbReference>
<dbReference type="SUPFAM" id="SSF52402">
    <property type="entry name" value="Adenine nucleotide alpha hydrolases-like"/>
    <property type="match status" value="1"/>
</dbReference>
<proteinExistence type="inferred from homology"/>
<evidence type="ECO:0000255" key="1">
    <source>
        <dbReference type="HAMAP-Rule" id="MF_01633"/>
    </source>
</evidence>